<sequence>MQQYLDLCKHILNNGIKKEDRTGTGTISTFGYQMRFDLQKGFPLLTTKKLHLKSIIHELLWFISGNTNIKYLKDNGVSIWDEWADENGNLGPVYGHQWRSWDTADGRSIDQLKGVIDQIKNNPDSRRLIVSSWNVGEIEKMALPPCHCFYQFYVVNGTLSCMLYQRSADVFIGVPFNIASYALFTMMIAQSCGLRAGEFVHTLGDAHIYLNHVEQVKLQLSRDPRPLPKMNINPDIKDLFQFKYSDFTLTDYDPHPHIKGAVAV</sequence>
<dbReference type="EC" id="2.1.1.45" evidence="1"/>
<dbReference type="EMBL" id="CP001348">
    <property type="protein sequence ID" value="ACL75663.1"/>
    <property type="molecule type" value="Genomic_DNA"/>
</dbReference>
<dbReference type="RefSeq" id="WP_015924811.1">
    <property type="nucleotide sequence ID" value="NC_011898.1"/>
</dbReference>
<dbReference type="SMR" id="B8I0T8"/>
<dbReference type="STRING" id="394503.Ccel_1309"/>
<dbReference type="KEGG" id="cce:Ccel_1309"/>
<dbReference type="eggNOG" id="COG0207">
    <property type="taxonomic scope" value="Bacteria"/>
</dbReference>
<dbReference type="HOGENOM" id="CLU_021669_0_0_9"/>
<dbReference type="OrthoDB" id="9774633at2"/>
<dbReference type="UniPathway" id="UPA00575"/>
<dbReference type="Proteomes" id="UP000001349">
    <property type="component" value="Chromosome"/>
</dbReference>
<dbReference type="GO" id="GO:0005829">
    <property type="term" value="C:cytosol"/>
    <property type="evidence" value="ECO:0007669"/>
    <property type="project" value="TreeGrafter"/>
</dbReference>
<dbReference type="GO" id="GO:0004799">
    <property type="term" value="F:thymidylate synthase activity"/>
    <property type="evidence" value="ECO:0007669"/>
    <property type="project" value="UniProtKB-UniRule"/>
</dbReference>
<dbReference type="GO" id="GO:0006231">
    <property type="term" value="P:dTMP biosynthetic process"/>
    <property type="evidence" value="ECO:0007669"/>
    <property type="project" value="UniProtKB-UniRule"/>
</dbReference>
<dbReference type="GO" id="GO:0006235">
    <property type="term" value="P:dTTP biosynthetic process"/>
    <property type="evidence" value="ECO:0007669"/>
    <property type="project" value="UniProtKB-UniRule"/>
</dbReference>
<dbReference type="GO" id="GO:0032259">
    <property type="term" value="P:methylation"/>
    <property type="evidence" value="ECO:0007669"/>
    <property type="project" value="UniProtKB-KW"/>
</dbReference>
<dbReference type="CDD" id="cd00351">
    <property type="entry name" value="TS_Pyrimidine_HMase"/>
    <property type="match status" value="1"/>
</dbReference>
<dbReference type="FunFam" id="3.30.572.10:FF:000001">
    <property type="entry name" value="Thymidylate synthase"/>
    <property type="match status" value="1"/>
</dbReference>
<dbReference type="Gene3D" id="3.30.572.10">
    <property type="entry name" value="Thymidylate synthase/dCMP hydroxymethylase domain"/>
    <property type="match status" value="1"/>
</dbReference>
<dbReference type="HAMAP" id="MF_00008">
    <property type="entry name" value="Thymidy_synth_bact"/>
    <property type="match status" value="1"/>
</dbReference>
<dbReference type="InterPro" id="IPR045097">
    <property type="entry name" value="Thymidate_synth/dCMP_Mease"/>
</dbReference>
<dbReference type="InterPro" id="IPR023451">
    <property type="entry name" value="Thymidate_synth/dCMP_Mease_dom"/>
</dbReference>
<dbReference type="InterPro" id="IPR036926">
    <property type="entry name" value="Thymidate_synth/dCMP_Mease_sf"/>
</dbReference>
<dbReference type="InterPro" id="IPR000398">
    <property type="entry name" value="Thymidylate_synthase"/>
</dbReference>
<dbReference type="InterPro" id="IPR020940">
    <property type="entry name" value="Thymidylate_synthase_AS"/>
</dbReference>
<dbReference type="NCBIfam" id="NF002497">
    <property type="entry name" value="PRK01827.1-3"/>
    <property type="match status" value="1"/>
</dbReference>
<dbReference type="NCBIfam" id="NF002499">
    <property type="entry name" value="PRK01827.1-5"/>
    <property type="match status" value="1"/>
</dbReference>
<dbReference type="NCBIfam" id="TIGR03284">
    <property type="entry name" value="thym_sym"/>
    <property type="match status" value="2"/>
</dbReference>
<dbReference type="PANTHER" id="PTHR11548:SF9">
    <property type="entry name" value="THYMIDYLATE SYNTHASE"/>
    <property type="match status" value="1"/>
</dbReference>
<dbReference type="PANTHER" id="PTHR11548">
    <property type="entry name" value="THYMIDYLATE SYNTHASE 1"/>
    <property type="match status" value="1"/>
</dbReference>
<dbReference type="Pfam" id="PF00303">
    <property type="entry name" value="Thymidylat_synt"/>
    <property type="match status" value="1"/>
</dbReference>
<dbReference type="PRINTS" id="PR00108">
    <property type="entry name" value="THYMDSNTHASE"/>
</dbReference>
<dbReference type="SUPFAM" id="SSF55831">
    <property type="entry name" value="Thymidylate synthase/dCMP hydroxymethylase"/>
    <property type="match status" value="1"/>
</dbReference>
<dbReference type="PROSITE" id="PS00091">
    <property type="entry name" value="THYMIDYLATE_SYNTHASE"/>
    <property type="match status" value="1"/>
</dbReference>
<comment type="function">
    <text evidence="1">Catalyzes the reductive methylation of 2'-deoxyuridine-5'-monophosphate (dUMP) to 2'-deoxythymidine-5'-monophosphate (dTMP) while utilizing 5,10-methylenetetrahydrofolate (mTHF) as the methyl donor and reductant in the reaction, yielding dihydrofolate (DHF) as a by-product. This enzymatic reaction provides an intracellular de novo source of dTMP, an essential precursor for DNA biosynthesis.</text>
</comment>
<comment type="catalytic activity">
    <reaction evidence="1">
        <text>dUMP + (6R)-5,10-methylene-5,6,7,8-tetrahydrofolate = 7,8-dihydrofolate + dTMP</text>
        <dbReference type="Rhea" id="RHEA:12104"/>
        <dbReference type="ChEBI" id="CHEBI:15636"/>
        <dbReference type="ChEBI" id="CHEBI:57451"/>
        <dbReference type="ChEBI" id="CHEBI:63528"/>
        <dbReference type="ChEBI" id="CHEBI:246422"/>
        <dbReference type="EC" id="2.1.1.45"/>
    </reaction>
</comment>
<comment type="pathway">
    <text evidence="1">Pyrimidine metabolism; dTTP biosynthesis.</text>
</comment>
<comment type="subunit">
    <text evidence="1">Homodimer.</text>
</comment>
<comment type="subcellular location">
    <subcellularLocation>
        <location evidence="1">Cytoplasm</location>
    </subcellularLocation>
</comment>
<comment type="similarity">
    <text evidence="1">Belongs to the thymidylate synthase family. Bacterial-type ThyA subfamily.</text>
</comment>
<protein>
    <recommendedName>
        <fullName evidence="1">Thymidylate synthase</fullName>
        <shortName evidence="1">TS</shortName>
        <shortName evidence="1">TSase</shortName>
        <ecNumber evidence="1">2.1.1.45</ecNumber>
    </recommendedName>
</protein>
<name>TYSY_RUMCH</name>
<gene>
    <name evidence="1" type="primary">thyA</name>
    <name type="ordered locus">Ccel_1309</name>
</gene>
<feature type="chain" id="PRO_1000197238" description="Thymidylate synthase">
    <location>
        <begin position="1"/>
        <end position="264"/>
    </location>
</feature>
<feature type="active site" description="Nucleophile" evidence="1">
    <location>
        <position position="146"/>
    </location>
</feature>
<feature type="binding site" description="in other chain" evidence="1">
    <location>
        <position position="21"/>
    </location>
    <ligand>
        <name>dUMP</name>
        <dbReference type="ChEBI" id="CHEBI:246422"/>
        <note>ligand shared between dimeric partners</note>
    </ligand>
</feature>
<feature type="binding site" evidence="1">
    <location>
        <position position="51"/>
    </location>
    <ligand>
        <name>(6R)-5,10-methylene-5,6,7,8-tetrahydrofolate</name>
        <dbReference type="ChEBI" id="CHEBI:15636"/>
    </ligand>
</feature>
<feature type="binding site" evidence="1">
    <location>
        <begin position="126"/>
        <end position="127"/>
    </location>
    <ligand>
        <name>dUMP</name>
        <dbReference type="ChEBI" id="CHEBI:246422"/>
        <note>ligand shared between dimeric partners</note>
    </ligand>
</feature>
<feature type="binding site" description="in other chain" evidence="1">
    <location>
        <begin position="166"/>
        <end position="169"/>
    </location>
    <ligand>
        <name>dUMP</name>
        <dbReference type="ChEBI" id="CHEBI:246422"/>
        <note>ligand shared between dimeric partners</note>
    </ligand>
</feature>
<feature type="binding site" evidence="1">
    <location>
        <position position="169"/>
    </location>
    <ligand>
        <name>(6R)-5,10-methylene-5,6,7,8-tetrahydrofolate</name>
        <dbReference type="ChEBI" id="CHEBI:15636"/>
    </ligand>
</feature>
<feature type="binding site" description="in other chain" evidence="1">
    <location>
        <position position="177"/>
    </location>
    <ligand>
        <name>dUMP</name>
        <dbReference type="ChEBI" id="CHEBI:246422"/>
        <note>ligand shared between dimeric partners</note>
    </ligand>
</feature>
<feature type="binding site" description="in other chain" evidence="1">
    <location>
        <begin position="207"/>
        <end position="209"/>
    </location>
    <ligand>
        <name>dUMP</name>
        <dbReference type="ChEBI" id="CHEBI:246422"/>
        <note>ligand shared between dimeric partners</note>
    </ligand>
</feature>
<feature type="binding site" evidence="1">
    <location>
        <position position="263"/>
    </location>
    <ligand>
        <name>(6R)-5,10-methylene-5,6,7,8-tetrahydrofolate</name>
        <dbReference type="ChEBI" id="CHEBI:15636"/>
    </ligand>
</feature>
<organism>
    <name type="scientific">Ruminiclostridium cellulolyticum (strain ATCC 35319 / DSM 5812 / JCM 6584 / H10)</name>
    <name type="common">Clostridium cellulolyticum</name>
    <dbReference type="NCBI Taxonomy" id="394503"/>
    <lineage>
        <taxon>Bacteria</taxon>
        <taxon>Bacillati</taxon>
        <taxon>Bacillota</taxon>
        <taxon>Clostridia</taxon>
        <taxon>Eubacteriales</taxon>
        <taxon>Oscillospiraceae</taxon>
        <taxon>Ruminiclostridium</taxon>
    </lineage>
</organism>
<proteinExistence type="inferred from homology"/>
<keyword id="KW-0963">Cytoplasm</keyword>
<keyword id="KW-0489">Methyltransferase</keyword>
<keyword id="KW-0545">Nucleotide biosynthesis</keyword>
<keyword id="KW-1185">Reference proteome</keyword>
<keyword id="KW-0808">Transferase</keyword>
<evidence type="ECO:0000255" key="1">
    <source>
        <dbReference type="HAMAP-Rule" id="MF_00008"/>
    </source>
</evidence>
<accession>B8I0T8</accession>
<reference key="1">
    <citation type="submission" date="2009-01" db="EMBL/GenBank/DDBJ databases">
        <title>Complete sequence of Clostridium cellulolyticum H10.</title>
        <authorList>
            <consortium name="US DOE Joint Genome Institute"/>
            <person name="Lucas S."/>
            <person name="Copeland A."/>
            <person name="Lapidus A."/>
            <person name="Glavina del Rio T."/>
            <person name="Dalin E."/>
            <person name="Tice H."/>
            <person name="Bruce D."/>
            <person name="Goodwin L."/>
            <person name="Pitluck S."/>
            <person name="Chertkov O."/>
            <person name="Saunders E."/>
            <person name="Brettin T."/>
            <person name="Detter J.C."/>
            <person name="Han C."/>
            <person name="Larimer F."/>
            <person name="Land M."/>
            <person name="Hauser L."/>
            <person name="Kyrpides N."/>
            <person name="Ivanova N."/>
            <person name="Zhou J."/>
            <person name="Richardson P."/>
        </authorList>
    </citation>
    <scope>NUCLEOTIDE SEQUENCE [LARGE SCALE GENOMIC DNA]</scope>
    <source>
        <strain>ATCC 35319 / DSM 5812 / JCM 6584 / H10</strain>
    </source>
</reference>